<protein>
    <recommendedName>
        <fullName evidence="1">Exodeoxyribonuclease 7 small subunit</fullName>
        <ecNumber evidence="1">3.1.11.6</ecNumber>
    </recommendedName>
    <alternativeName>
        <fullName evidence="1">Exodeoxyribonuclease VII small subunit</fullName>
        <shortName evidence="1">Exonuclease VII small subunit</shortName>
    </alternativeName>
</protein>
<keyword id="KW-0963">Cytoplasm</keyword>
<keyword id="KW-0269">Exonuclease</keyword>
<keyword id="KW-0378">Hydrolase</keyword>
<keyword id="KW-0540">Nuclease</keyword>
<keyword id="KW-1185">Reference proteome</keyword>
<proteinExistence type="inferred from homology"/>
<evidence type="ECO:0000255" key="1">
    <source>
        <dbReference type="HAMAP-Rule" id="MF_00337"/>
    </source>
</evidence>
<gene>
    <name evidence="1" type="primary">xseB</name>
    <name type="ordered locus">ECA1133</name>
</gene>
<feature type="chain" id="PRO_0000206949" description="Exodeoxyribonuclease 7 small subunit">
    <location>
        <begin position="1"/>
        <end position="82"/>
    </location>
</feature>
<accession>Q6D842</accession>
<name>EX7S_PECAS</name>
<comment type="function">
    <text evidence="1">Bidirectionally degrades single-stranded DNA into large acid-insoluble oligonucleotides, which are then degraded further into small acid-soluble oligonucleotides.</text>
</comment>
<comment type="catalytic activity">
    <reaction evidence="1">
        <text>Exonucleolytic cleavage in either 5'- to 3'- or 3'- to 5'-direction to yield nucleoside 5'-phosphates.</text>
        <dbReference type="EC" id="3.1.11.6"/>
    </reaction>
</comment>
<comment type="subunit">
    <text evidence="1">Heterooligomer composed of large and small subunits.</text>
</comment>
<comment type="subcellular location">
    <subcellularLocation>
        <location evidence="1">Cytoplasm</location>
    </subcellularLocation>
</comment>
<comment type="similarity">
    <text evidence="1">Belongs to the XseB family.</text>
</comment>
<sequence>MPKKTEQPVSFESSLNELEKIVTRLESGELPLDDALNEFEHGIQLARQGQQKLQQAEQRVQILLSDDPDAPLSPFTPDNDTL</sequence>
<reference key="1">
    <citation type="journal article" date="2004" name="Proc. Natl. Acad. Sci. U.S.A.">
        <title>Genome sequence of the enterobacterial phytopathogen Erwinia carotovora subsp. atroseptica and characterization of virulence factors.</title>
        <authorList>
            <person name="Bell K.S."/>
            <person name="Sebaihia M."/>
            <person name="Pritchard L."/>
            <person name="Holden M.T.G."/>
            <person name="Hyman L.J."/>
            <person name="Holeva M.C."/>
            <person name="Thomson N.R."/>
            <person name="Bentley S.D."/>
            <person name="Churcher L.J.C."/>
            <person name="Mungall K."/>
            <person name="Atkin R."/>
            <person name="Bason N."/>
            <person name="Brooks K."/>
            <person name="Chillingworth T."/>
            <person name="Clark K."/>
            <person name="Doggett J."/>
            <person name="Fraser A."/>
            <person name="Hance Z."/>
            <person name="Hauser H."/>
            <person name="Jagels K."/>
            <person name="Moule S."/>
            <person name="Norbertczak H."/>
            <person name="Ormond D."/>
            <person name="Price C."/>
            <person name="Quail M.A."/>
            <person name="Sanders M."/>
            <person name="Walker D."/>
            <person name="Whitehead S."/>
            <person name="Salmond G.P.C."/>
            <person name="Birch P.R.J."/>
            <person name="Parkhill J."/>
            <person name="Toth I.K."/>
        </authorList>
    </citation>
    <scope>NUCLEOTIDE SEQUENCE [LARGE SCALE GENOMIC DNA]</scope>
    <source>
        <strain>SCRI 1043 / ATCC BAA-672</strain>
    </source>
</reference>
<organism>
    <name type="scientific">Pectobacterium atrosepticum (strain SCRI 1043 / ATCC BAA-672)</name>
    <name type="common">Erwinia carotovora subsp. atroseptica</name>
    <dbReference type="NCBI Taxonomy" id="218491"/>
    <lineage>
        <taxon>Bacteria</taxon>
        <taxon>Pseudomonadati</taxon>
        <taxon>Pseudomonadota</taxon>
        <taxon>Gammaproteobacteria</taxon>
        <taxon>Enterobacterales</taxon>
        <taxon>Pectobacteriaceae</taxon>
        <taxon>Pectobacterium</taxon>
    </lineage>
</organism>
<dbReference type="EC" id="3.1.11.6" evidence="1"/>
<dbReference type="EMBL" id="BX950851">
    <property type="protein sequence ID" value="CAG74043.1"/>
    <property type="molecule type" value="Genomic_DNA"/>
</dbReference>
<dbReference type="RefSeq" id="WP_011092727.1">
    <property type="nucleotide sequence ID" value="NC_004547.2"/>
</dbReference>
<dbReference type="SMR" id="Q6D842"/>
<dbReference type="STRING" id="218491.ECA1133"/>
<dbReference type="GeneID" id="57207947"/>
<dbReference type="KEGG" id="eca:ECA1133"/>
<dbReference type="eggNOG" id="COG1722">
    <property type="taxonomic scope" value="Bacteria"/>
</dbReference>
<dbReference type="HOGENOM" id="CLU_145918_3_3_6"/>
<dbReference type="OrthoDB" id="5591562at2"/>
<dbReference type="Proteomes" id="UP000007966">
    <property type="component" value="Chromosome"/>
</dbReference>
<dbReference type="GO" id="GO:0005829">
    <property type="term" value="C:cytosol"/>
    <property type="evidence" value="ECO:0007669"/>
    <property type="project" value="TreeGrafter"/>
</dbReference>
<dbReference type="GO" id="GO:0009318">
    <property type="term" value="C:exodeoxyribonuclease VII complex"/>
    <property type="evidence" value="ECO:0007669"/>
    <property type="project" value="InterPro"/>
</dbReference>
<dbReference type="GO" id="GO:0008855">
    <property type="term" value="F:exodeoxyribonuclease VII activity"/>
    <property type="evidence" value="ECO:0007669"/>
    <property type="project" value="UniProtKB-UniRule"/>
</dbReference>
<dbReference type="GO" id="GO:0006308">
    <property type="term" value="P:DNA catabolic process"/>
    <property type="evidence" value="ECO:0007669"/>
    <property type="project" value="UniProtKB-UniRule"/>
</dbReference>
<dbReference type="FunFam" id="1.10.287.1040:FF:000001">
    <property type="entry name" value="Exodeoxyribonuclease 7 small subunit"/>
    <property type="match status" value="1"/>
</dbReference>
<dbReference type="Gene3D" id="1.10.287.1040">
    <property type="entry name" value="Exonuclease VII, small subunit"/>
    <property type="match status" value="1"/>
</dbReference>
<dbReference type="HAMAP" id="MF_00337">
    <property type="entry name" value="Exonuc_7_S"/>
    <property type="match status" value="1"/>
</dbReference>
<dbReference type="InterPro" id="IPR003761">
    <property type="entry name" value="Exonuc_VII_S"/>
</dbReference>
<dbReference type="InterPro" id="IPR037004">
    <property type="entry name" value="Exonuc_VII_ssu_sf"/>
</dbReference>
<dbReference type="NCBIfam" id="NF002137">
    <property type="entry name" value="PRK00977.1-1"/>
    <property type="match status" value="1"/>
</dbReference>
<dbReference type="NCBIfam" id="NF002140">
    <property type="entry name" value="PRK00977.1-4"/>
    <property type="match status" value="1"/>
</dbReference>
<dbReference type="NCBIfam" id="TIGR01280">
    <property type="entry name" value="xseB"/>
    <property type="match status" value="1"/>
</dbReference>
<dbReference type="PANTHER" id="PTHR34137">
    <property type="entry name" value="EXODEOXYRIBONUCLEASE 7 SMALL SUBUNIT"/>
    <property type="match status" value="1"/>
</dbReference>
<dbReference type="PANTHER" id="PTHR34137:SF1">
    <property type="entry name" value="EXODEOXYRIBONUCLEASE 7 SMALL SUBUNIT"/>
    <property type="match status" value="1"/>
</dbReference>
<dbReference type="Pfam" id="PF02609">
    <property type="entry name" value="Exonuc_VII_S"/>
    <property type="match status" value="1"/>
</dbReference>
<dbReference type="PIRSF" id="PIRSF006488">
    <property type="entry name" value="Exonuc_VII_S"/>
    <property type="match status" value="1"/>
</dbReference>
<dbReference type="SUPFAM" id="SSF116842">
    <property type="entry name" value="XseB-like"/>
    <property type="match status" value="1"/>
</dbReference>